<feature type="chain" id="PRO_0000255124" description="Cytochrome b">
    <location>
        <begin position="1"/>
        <end position="383"/>
    </location>
</feature>
<feature type="transmembrane region" description="Helical" evidence="2">
    <location>
        <begin position="33"/>
        <end position="53"/>
    </location>
</feature>
<feature type="transmembrane region" description="Helical" evidence="2">
    <location>
        <begin position="77"/>
        <end position="98"/>
    </location>
</feature>
<feature type="transmembrane region" description="Helical" evidence="2">
    <location>
        <begin position="113"/>
        <end position="133"/>
    </location>
</feature>
<feature type="transmembrane region" description="Helical" evidence="2">
    <location>
        <begin position="178"/>
        <end position="198"/>
    </location>
</feature>
<feature type="transmembrane region" description="Helical" evidence="2">
    <location>
        <begin position="226"/>
        <end position="246"/>
    </location>
</feature>
<feature type="transmembrane region" description="Helical" evidence="2">
    <location>
        <begin position="288"/>
        <end position="308"/>
    </location>
</feature>
<feature type="transmembrane region" description="Helical" evidence="2">
    <location>
        <begin position="320"/>
        <end position="340"/>
    </location>
</feature>
<feature type="transmembrane region" description="Helical" evidence="2">
    <location>
        <begin position="347"/>
        <end position="367"/>
    </location>
</feature>
<feature type="binding site" description="axial binding residue" evidence="2">
    <location>
        <position position="83"/>
    </location>
    <ligand>
        <name>heme b</name>
        <dbReference type="ChEBI" id="CHEBI:60344"/>
        <label>b562</label>
    </ligand>
    <ligandPart>
        <name>Fe</name>
        <dbReference type="ChEBI" id="CHEBI:18248"/>
    </ligandPart>
</feature>
<feature type="binding site" description="axial binding residue" evidence="2">
    <location>
        <position position="97"/>
    </location>
    <ligand>
        <name>heme b</name>
        <dbReference type="ChEBI" id="CHEBI:60344"/>
        <label>b566</label>
    </ligand>
    <ligandPart>
        <name>Fe</name>
        <dbReference type="ChEBI" id="CHEBI:18248"/>
    </ligandPart>
</feature>
<feature type="binding site" description="axial binding residue" evidence="2">
    <location>
        <position position="182"/>
    </location>
    <ligand>
        <name>heme b</name>
        <dbReference type="ChEBI" id="CHEBI:60344"/>
        <label>b562</label>
    </ligand>
    <ligandPart>
        <name>Fe</name>
        <dbReference type="ChEBI" id="CHEBI:18248"/>
    </ligandPart>
</feature>
<feature type="binding site" description="axial binding residue" evidence="2">
    <location>
        <position position="196"/>
    </location>
    <ligand>
        <name>heme b</name>
        <dbReference type="ChEBI" id="CHEBI:60344"/>
        <label>b566</label>
    </ligand>
    <ligandPart>
        <name>Fe</name>
        <dbReference type="ChEBI" id="CHEBI:18248"/>
    </ligandPart>
</feature>
<feature type="binding site" evidence="2">
    <location>
        <position position="201"/>
    </location>
    <ligand>
        <name>a ubiquinone</name>
        <dbReference type="ChEBI" id="CHEBI:16389"/>
    </ligand>
</feature>
<protein>
    <recommendedName>
        <fullName>Cytochrome b</fullName>
    </recommendedName>
    <alternativeName>
        <fullName>Complex III subunit 3</fullName>
    </alternativeName>
    <alternativeName>
        <fullName>Complex III subunit III</fullName>
    </alternativeName>
    <alternativeName>
        <fullName>Cytochrome b-c1 complex subunit 3</fullName>
    </alternativeName>
    <alternativeName>
        <fullName>Ubiquinol-cytochrome-c reductase complex cytochrome b subunit</fullName>
    </alternativeName>
</protein>
<accession>Q4VGP8</accession>
<evidence type="ECO:0000250" key="1"/>
<evidence type="ECO:0000250" key="2">
    <source>
        <dbReference type="UniProtKB" id="P00157"/>
    </source>
</evidence>
<evidence type="ECO:0000255" key="3">
    <source>
        <dbReference type="PROSITE-ProRule" id="PRU00967"/>
    </source>
</evidence>
<evidence type="ECO:0000255" key="4">
    <source>
        <dbReference type="PROSITE-ProRule" id="PRU00968"/>
    </source>
</evidence>
<organism>
    <name type="scientific">Psammomys vexillaris</name>
    <name type="common">Thin sand rat</name>
    <dbReference type="NCBI Taxonomy" id="323362"/>
    <lineage>
        <taxon>Eukaryota</taxon>
        <taxon>Metazoa</taxon>
        <taxon>Chordata</taxon>
        <taxon>Craniata</taxon>
        <taxon>Vertebrata</taxon>
        <taxon>Euteleostomi</taxon>
        <taxon>Mammalia</taxon>
        <taxon>Eutheria</taxon>
        <taxon>Euarchontoglires</taxon>
        <taxon>Glires</taxon>
        <taxon>Rodentia</taxon>
        <taxon>Myomorpha</taxon>
        <taxon>Muroidea</taxon>
        <taxon>Muridae</taxon>
        <taxon>Gerbillinae</taxon>
        <taxon>Psammomys</taxon>
    </lineage>
</organism>
<reference key="1">
    <citation type="journal article" date="2006" name="Infect. Genet. Evol.">
        <title>Evidence for the existence of two distinct species: Psammomys obesus and Psammomys vexillaris within the sand rats (Rodentia, Gerbillinae), reservoirs of cutaneous leishmaniasis in Tunisia.</title>
        <authorList>
            <person name="Mostafa B.H."/>
            <person name="Abderrazak Souha B."/>
            <person name="Sabeh F."/>
            <person name="Noureddine C."/>
            <person name="Riadh B.I."/>
        </authorList>
    </citation>
    <scope>NUCLEOTIDE SEQUENCE [GENOMIC DNA]</scope>
</reference>
<comment type="function">
    <text evidence="2">Component of the ubiquinol-cytochrome c reductase complex (complex III or cytochrome b-c1 complex) that is part of the mitochondrial respiratory chain. The b-c1 complex mediates electron transfer from ubiquinol to cytochrome c. Contributes to the generation of a proton gradient across the mitochondrial membrane that is then used for ATP synthesis.</text>
</comment>
<comment type="cofactor">
    <cofactor evidence="2">
        <name>heme b</name>
        <dbReference type="ChEBI" id="CHEBI:60344"/>
    </cofactor>
    <text evidence="2">Binds 2 heme b groups non-covalently.</text>
</comment>
<comment type="subunit">
    <text evidence="2">The cytochrome bc1 complex contains 11 subunits: 3 respiratory subunits (MT-CYB, CYC1 and UQCRFS1), 2 core proteins (UQCRC1 and UQCRC2) and 6 low-molecular weight proteins (UQCRH/QCR6, UQCRB/QCR7, UQCRQ/QCR8, UQCR10/QCR9, UQCR11/QCR10 and a cleavage product of UQCRFS1). This cytochrome bc1 complex then forms a dimer.</text>
</comment>
<comment type="subcellular location">
    <subcellularLocation>
        <location evidence="2">Mitochondrion inner membrane</location>
        <topology evidence="2">Multi-pass membrane protein</topology>
    </subcellularLocation>
</comment>
<comment type="miscellaneous">
    <text evidence="1">Heme 1 (or BL or b562) is low-potential and absorbs at about 562 nm, and heme 2 (or BH or b566) is high-potential and absorbs at about 566 nm.</text>
</comment>
<comment type="similarity">
    <text evidence="3 4">Belongs to the cytochrome b family.</text>
</comment>
<comment type="caution">
    <text evidence="2">The full-length protein contains only eight transmembrane helices, not nine as predicted by bioinformatics tools.</text>
</comment>
<sequence length="383" mass="43296">MMNLRKNHPLLKMVNHSFIDLPTPPNISSWWNFGSLLGICLVIQIATGLFLAMHYTADTTTAFSSVSHICRDVNYGWLIRYMHANGASMFFICLFIHIGRGIYYGSYIFTETWNIGVILLFAVMATAFMGYVLPWGQMSFWGATVITNLLSAIPYIGPTIVEWIWGGFSVNKATLTRFFAFHFILPFIIAALVLVHLLFLHETGSNNPLGLNSNADKIPFHPYYTVKDFLGGGLLIFFFMLLVLFFPDMLGDPDNYTPANPLNTPPHIKPEWYFLFAYAILRSIPNKLGGVLALVLSILILIFLPLIHTSKQRSLMFRPISQMLYWILIANLIILTWIGGQPVGDPFIIIGQLASISYFSIILILLPIAGIIEDKLLKWYLCL</sequence>
<geneLocation type="mitochondrion"/>
<gene>
    <name type="primary">MT-CYB</name>
    <name type="synonym">COB</name>
    <name type="synonym">CYTB</name>
    <name type="synonym">MTCYB</name>
</gene>
<keyword id="KW-0249">Electron transport</keyword>
<keyword id="KW-0349">Heme</keyword>
<keyword id="KW-0408">Iron</keyword>
<keyword id="KW-0472">Membrane</keyword>
<keyword id="KW-0479">Metal-binding</keyword>
<keyword id="KW-0496">Mitochondrion</keyword>
<keyword id="KW-0999">Mitochondrion inner membrane</keyword>
<keyword id="KW-0679">Respiratory chain</keyword>
<keyword id="KW-0812">Transmembrane</keyword>
<keyword id="KW-1133">Transmembrane helix</keyword>
<keyword id="KW-0813">Transport</keyword>
<keyword id="KW-0830">Ubiquinone</keyword>
<name>CYB_PSAVE</name>
<dbReference type="EMBL" id="AY934541">
    <property type="protein sequence ID" value="AAY17370.1"/>
    <property type="molecule type" value="Genomic_DNA"/>
</dbReference>
<dbReference type="SMR" id="Q4VGP8"/>
<dbReference type="GO" id="GO:0005743">
    <property type="term" value="C:mitochondrial inner membrane"/>
    <property type="evidence" value="ECO:0007669"/>
    <property type="project" value="UniProtKB-SubCell"/>
</dbReference>
<dbReference type="GO" id="GO:0045275">
    <property type="term" value="C:respiratory chain complex III"/>
    <property type="evidence" value="ECO:0007669"/>
    <property type="project" value="InterPro"/>
</dbReference>
<dbReference type="GO" id="GO:0046872">
    <property type="term" value="F:metal ion binding"/>
    <property type="evidence" value="ECO:0007669"/>
    <property type="project" value="UniProtKB-KW"/>
</dbReference>
<dbReference type="GO" id="GO:0008121">
    <property type="term" value="F:ubiquinol-cytochrome-c reductase activity"/>
    <property type="evidence" value="ECO:0007669"/>
    <property type="project" value="InterPro"/>
</dbReference>
<dbReference type="GO" id="GO:0006122">
    <property type="term" value="P:mitochondrial electron transport, ubiquinol to cytochrome c"/>
    <property type="evidence" value="ECO:0007669"/>
    <property type="project" value="TreeGrafter"/>
</dbReference>
<dbReference type="CDD" id="cd00290">
    <property type="entry name" value="cytochrome_b_C"/>
    <property type="match status" value="1"/>
</dbReference>
<dbReference type="CDD" id="cd00284">
    <property type="entry name" value="Cytochrome_b_N"/>
    <property type="match status" value="1"/>
</dbReference>
<dbReference type="FunFam" id="1.20.810.10:FF:000002">
    <property type="entry name" value="Cytochrome b"/>
    <property type="match status" value="1"/>
</dbReference>
<dbReference type="Gene3D" id="1.20.810.10">
    <property type="entry name" value="Cytochrome Bc1 Complex, Chain C"/>
    <property type="match status" value="1"/>
</dbReference>
<dbReference type="InterPro" id="IPR005798">
    <property type="entry name" value="Cyt_b/b6_C"/>
</dbReference>
<dbReference type="InterPro" id="IPR036150">
    <property type="entry name" value="Cyt_b/b6_C_sf"/>
</dbReference>
<dbReference type="InterPro" id="IPR005797">
    <property type="entry name" value="Cyt_b/b6_N"/>
</dbReference>
<dbReference type="InterPro" id="IPR027387">
    <property type="entry name" value="Cytb/b6-like_sf"/>
</dbReference>
<dbReference type="InterPro" id="IPR030689">
    <property type="entry name" value="Cytochrome_b"/>
</dbReference>
<dbReference type="InterPro" id="IPR048260">
    <property type="entry name" value="Cytochrome_b_C_euk/bac"/>
</dbReference>
<dbReference type="InterPro" id="IPR048259">
    <property type="entry name" value="Cytochrome_b_N_euk/bac"/>
</dbReference>
<dbReference type="InterPro" id="IPR016174">
    <property type="entry name" value="Di-haem_cyt_TM"/>
</dbReference>
<dbReference type="PANTHER" id="PTHR19271">
    <property type="entry name" value="CYTOCHROME B"/>
    <property type="match status" value="1"/>
</dbReference>
<dbReference type="PANTHER" id="PTHR19271:SF16">
    <property type="entry name" value="CYTOCHROME B"/>
    <property type="match status" value="1"/>
</dbReference>
<dbReference type="Pfam" id="PF00032">
    <property type="entry name" value="Cytochrom_B_C"/>
    <property type="match status" value="1"/>
</dbReference>
<dbReference type="Pfam" id="PF00033">
    <property type="entry name" value="Cytochrome_B"/>
    <property type="match status" value="1"/>
</dbReference>
<dbReference type="PIRSF" id="PIRSF038885">
    <property type="entry name" value="COB"/>
    <property type="match status" value="1"/>
</dbReference>
<dbReference type="SUPFAM" id="SSF81648">
    <property type="entry name" value="a domain/subunit of cytochrome bc1 complex (Ubiquinol-cytochrome c reductase)"/>
    <property type="match status" value="1"/>
</dbReference>
<dbReference type="SUPFAM" id="SSF81342">
    <property type="entry name" value="Transmembrane di-heme cytochromes"/>
    <property type="match status" value="1"/>
</dbReference>
<dbReference type="PROSITE" id="PS51003">
    <property type="entry name" value="CYTB_CTER"/>
    <property type="match status" value="1"/>
</dbReference>
<dbReference type="PROSITE" id="PS51002">
    <property type="entry name" value="CYTB_NTER"/>
    <property type="match status" value="1"/>
</dbReference>
<proteinExistence type="inferred from homology"/>